<comment type="function">
    <text evidence="1">Catalyzes the formation of 6,7-dimethyl-8-ribityllumazine by condensation of 5-amino-6-(D-ribitylamino)uracil with 3,4-dihydroxy-2-butanone 4-phosphate. This is the penultimate step in the biosynthesis of riboflavin.</text>
</comment>
<comment type="catalytic activity">
    <reaction evidence="1">
        <text>(2S)-2-hydroxy-3-oxobutyl phosphate + 5-amino-6-(D-ribitylamino)uracil = 6,7-dimethyl-8-(1-D-ribityl)lumazine + phosphate + 2 H2O + H(+)</text>
        <dbReference type="Rhea" id="RHEA:26152"/>
        <dbReference type="ChEBI" id="CHEBI:15377"/>
        <dbReference type="ChEBI" id="CHEBI:15378"/>
        <dbReference type="ChEBI" id="CHEBI:15934"/>
        <dbReference type="ChEBI" id="CHEBI:43474"/>
        <dbReference type="ChEBI" id="CHEBI:58201"/>
        <dbReference type="ChEBI" id="CHEBI:58830"/>
        <dbReference type="EC" id="2.5.1.78"/>
    </reaction>
</comment>
<comment type="pathway">
    <text evidence="1">Cofactor biosynthesis; riboflavin biosynthesis; riboflavin from 2-hydroxy-3-oxobutyl phosphate and 5-amino-6-(D-ribitylamino)uracil: step 1/2.</text>
</comment>
<comment type="subunit">
    <text evidence="1">Forms an icosahedral capsid composed of 60 subunits, arranged as a dodecamer of pentamers.</text>
</comment>
<comment type="similarity">
    <text evidence="1">Belongs to the DMRL synthase family.</text>
</comment>
<feature type="chain" id="PRO_0000134781" description="6,7-dimethyl-8-ribityllumazine synthase">
    <location>
        <begin position="1"/>
        <end position="156"/>
    </location>
</feature>
<feature type="active site" description="Proton donor" evidence="1">
    <location>
        <position position="89"/>
    </location>
</feature>
<feature type="binding site" evidence="1">
    <location>
        <position position="22"/>
    </location>
    <ligand>
        <name>5-amino-6-(D-ribitylamino)uracil</name>
        <dbReference type="ChEBI" id="CHEBI:15934"/>
    </ligand>
</feature>
<feature type="binding site" evidence="1">
    <location>
        <begin position="57"/>
        <end position="59"/>
    </location>
    <ligand>
        <name>5-amino-6-(D-ribitylamino)uracil</name>
        <dbReference type="ChEBI" id="CHEBI:15934"/>
    </ligand>
</feature>
<feature type="binding site" evidence="1">
    <location>
        <begin position="81"/>
        <end position="83"/>
    </location>
    <ligand>
        <name>5-amino-6-(D-ribitylamino)uracil</name>
        <dbReference type="ChEBI" id="CHEBI:15934"/>
    </ligand>
</feature>
<feature type="binding site" evidence="1">
    <location>
        <begin position="86"/>
        <end position="87"/>
    </location>
    <ligand>
        <name>(2S)-2-hydroxy-3-oxobutyl phosphate</name>
        <dbReference type="ChEBI" id="CHEBI:58830"/>
    </ligand>
</feature>
<feature type="binding site" evidence="1">
    <location>
        <position position="114"/>
    </location>
    <ligand>
        <name>5-amino-6-(D-ribitylamino)uracil</name>
        <dbReference type="ChEBI" id="CHEBI:15934"/>
    </ligand>
</feature>
<feature type="binding site" evidence="1">
    <location>
        <position position="128"/>
    </location>
    <ligand>
        <name>(2S)-2-hydroxy-3-oxobutyl phosphate</name>
        <dbReference type="ChEBI" id="CHEBI:58830"/>
    </ligand>
</feature>
<keyword id="KW-1185">Reference proteome</keyword>
<keyword id="KW-0686">Riboflavin biosynthesis</keyword>
<keyword id="KW-0808">Transferase</keyword>
<sequence>MNVIKGVVAAPQARVAIAIARFNNFINDSLLGGAVDALERIGQVASENITVVWVPGAYELPLTVKTLVETQKYDAVVALGTVIRGGTAHFEYVAGECSSGLSSVAMASEIPVAFGVLTTESIEQAIERAGTKAGNKGAEAALTALEMVNVINAIKG</sequence>
<gene>
    <name evidence="1" type="primary">ribH</name>
    <name type="ordered locus">plu3898</name>
</gene>
<dbReference type="EC" id="2.5.1.78" evidence="1"/>
<dbReference type="EMBL" id="BX571872">
    <property type="protein sequence ID" value="CAE16270.1"/>
    <property type="molecule type" value="Genomic_DNA"/>
</dbReference>
<dbReference type="RefSeq" id="WP_011148033.1">
    <property type="nucleotide sequence ID" value="NC_005126.1"/>
</dbReference>
<dbReference type="SMR" id="Q7N0I9"/>
<dbReference type="STRING" id="243265.plu3898"/>
<dbReference type="GeneID" id="48850127"/>
<dbReference type="KEGG" id="plu:plu3898"/>
<dbReference type="eggNOG" id="COG0054">
    <property type="taxonomic scope" value="Bacteria"/>
</dbReference>
<dbReference type="HOGENOM" id="CLU_089358_1_1_6"/>
<dbReference type="OrthoDB" id="9809709at2"/>
<dbReference type="UniPathway" id="UPA00275">
    <property type="reaction ID" value="UER00404"/>
</dbReference>
<dbReference type="Proteomes" id="UP000002514">
    <property type="component" value="Chromosome"/>
</dbReference>
<dbReference type="GO" id="GO:0005829">
    <property type="term" value="C:cytosol"/>
    <property type="evidence" value="ECO:0007669"/>
    <property type="project" value="TreeGrafter"/>
</dbReference>
<dbReference type="GO" id="GO:0009349">
    <property type="term" value="C:riboflavin synthase complex"/>
    <property type="evidence" value="ECO:0007669"/>
    <property type="project" value="InterPro"/>
</dbReference>
<dbReference type="GO" id="GO:0000906">
    <property type="term" value="F:6,7-dimethyl-8-ribityllumazine synthase activity"/>
    <property type="evidence" value="ECO:0007669"/>
    <property type="project" value="UniProtKB-UniRule"/>
</dbReference>
<dbReference type="GO" id="GO:0009231">
    <property type="term" value="P:riboflavin biosynthetic process"/>
    <property type="evidence" value="ECO:0007669"/>
    <property type="project" value="UniProtKB-UniRule"/>
</dbReference>
<dbReference type="CDD" id="cd09209">
    <property type="entry name" value="Lumazine_synthase-I"/>
    <property type="match status" value="1"/>
</dbReference>
<dbReference type="FunFam" id="3.40.50.960:FF:000001">
    <property type="entry name" value="6,7-dimethyl-8-ribityllumazine synthase"/>
    <property type="match status" value="1"/>
</dbReference>
<dbReference type="Gene3D" id="3.40.50.960">
    <property type="entry name" value="Lumazine/riboflavin synthase"/>
    <property type="match status" value="1"/>
</dbReference>
<dbReference type="HAMAP" id="MF_00178">
    <property type="entry name" value="Lumazine_synth"/>
    <property type="match status" value="1"/>
</dbReference>
<dbReference type="InterPro" id="IPR034964">
    <property type="entry name" value="LS"/>
</dbReference>
<dbReference type="InterPro" id="IPR002180">
    <property type="entry name" value="LS/RS"/>
</dbReference>
<dbReference type="InterPro" id="IPR036467">
    <property type="entry name" value="LS/RS_sf"/>
</dbReference>
<dbReference type="NCBIfam" id="TIGR00114">
    <property type="entry name" value="lumazine-synth"/>
    <property type="match status" value="1"/>
</dbReference>
<dbReference type="NCBIfam" id="NF000812">
    <property type="entry name" value="PRK00061.1-4"/>
    <property type="match status" value="1"/>
</dbReference>
<dbReference type="PANTHER" id="PTHR21058:SF0">
    <property type="entry name" value="6,7-DIMETHYL-8-RIBITYLLUMAZINE SYNTHASE"/>
    <property type="match status" value="1"/>
</dbReference>
<dbReference type="PANTHER" id="PTHR21058">
    <property type="entry name" value="6,7-DIMETHYL-8-RIBITYLLUMAZINE SYNTHASE DMRL SYNTHASE LUMAZINE SYNTHASE"/>
    <property type="match status" value="1"/>
</dbReference>
<dbReference type="Pfam" id="PF00885">
    <property type="entry name" value="DMRL_synthase"/>
    <property type="match status" value="1"/>
</dbReference>
<dbReference type="SUPFAM" id="SSF52121">
    <property type="entry name" value="Lumazine synthase"/>
    <property type="match status" value="1"/>
</dbReference>
<reference key="1">
    <citation type="journal article" date="2003" name="Nat. Biotechnol.">
        <title>The genome sequence of the entomopathogenic bacterium Photorhabdus luminescens.</title>
        <authorList>
            <person name="Duchaud E."/>
            <person name="Rusniok C."/>
            <person name="Frangeul L."/>
            <person name="Buchrieser C."/>
            <person name="Givaudan A."/>
            <person name="Taourit S."/>
            <person name="Bocs S."/>
            <person name="Boursaux-Eude C."/>
            <person name="Chandler M."/>
            <person name="Charles J.-F."/>
            <person name="Dassa E."/>
            <person name="Derose R."/>
            <person name="Derzelle S."/>
            <person name="Freyssinet G."/>
            <person name="Gaudriault S."/>
            <person name="Medigue C."/>
            <person name="Lanois A."/>
            <person name="Powell K."/>
            <person name="Siguier P."/>
            <person name="Vincent R."/>
            <person name="Wingate V."/>
            <person name="Zouine M."/>
            <person name="Glaser P."/>
            <person name="Boemare N."/>
            <person name="Danchin A."/>
            <person name="Kunst F."/>
        </authorList>
    </citation>
    <scope>NUCLEOTIDE SEQUENCE [LARGE SCALE GENOMIC DNA]</scope>
    <source>
        <strain>DSM 15139 / CIP 105565 / TT01</strain>
    </source>
</reference>
<proteinExistence type="inferred from homology"/>
<protein>
    <recommendedName>
        <fullName evidence="1">6,7-dimethyl-8-ribityllumazine synthase</fullName>
        <shortName evidence="1">DMRL synthase</shortName>
        <shortName evidence="1">LS</shortName>
        <shortName evidence="1">Lumazine synthase</shortName>
        <ecNumber evidence="1">2.5.1.78</ecNumber>
    </recommendedName>
</protein>
<name>RISB_PHOLL</name>
<evidence type="ECO:0000255" key="1">
    <source>
        <dbReference type="HAMAP-Rule" id="MF_00178"/>
    </source>
</evidence>
<accession>Q7N0I9</accession>
<organism>
    <name type="scientific">Photorhabdus laumondii subsp. laumondii (strain DSM 15139 / CIP 105565 / TT01)</name>
    <name type="common">Photorhabdus luminescens subsp. laumondii</name>
    <dbReference type="NCBI Taxonomy" id="243265"/>
    <lineage>
        <taxon>Bacteria</taxon>
        <taxon>Pseudomonadati</taxon>
        <taxon>Pseudomonadota</taxon>
        <taxon>Gammaproteobacteria</taxon>
        <taxon>Enterobacterales</taxon>
        <taxon>Morganellaceae</taxon>
        <taxon>Photorhabdus</taxon>
    </lineage>
</organism>